<sequence>MSKITALFKELKATGKKGLIPFIAAGDPDPKQTVELMHALVRGGSSVIELGVPFSDPMADGPVIQRLSERALTHGVTLHSCLEMVKEFRKKDANTPVVLMGYANPVEQMGAERFATEAKAAGVDGVLVVDCPPEECVDFAARMRVAGIDPIFLLAPTSSQERIKGAAKIASGYIYYVSMRGVTGASHLNTQDVASIIPKIREETDIPIAVGFGISDAASAKAVSTSADAVVIGSQIIRLLEDAPSGQAVQSLETFIREIRDALDS</sequence>
<name>TRPA_POLNS</name>
<dbReference type="EC" id="4.2.1.20" evidence="1"/>
<dbReference type="EMBL" id="CP001010">
    <property type="protein sequence ID" value="ACB44223.1"/>
    <property type="molecule type" value="Genomic_DNA"/>
</dbReference>
<dbReference type="SMR" id="B1XV46"/>
<dbReference type="STRING" id="452638.Pnec_1048"/>
<dbReference type="KEGG" id="pne:Pnec_1048"/>
<dbReference type="eggNOG" id="COG0159">
    <property type="taxonomic scope" value="Bacteria"/>
</dbReference>
<dbReference type="HOGENOM" id="CLU_016734_0_4_4"/>
<dbReference type="OrthoDB" id="9804578at2"/>
<dbReference type="UniPathway" id="UPA00035">
    <property type="reaction ID" value="UER00044"/>
</dbReference>
<dbReference type="GO" id="GO:0005829">
    <property type="term" value="C:cytosol"/>
    <property type="evidence" value="ECO:0007669"/>
    <property type="project" value="TreeGrafter"/>
</dbReference>
<dbReference type="GO" id="GO:0004834">
    <property type="term" value="F:tryptophan synthase activity"/>
    <property type="evidence" value="ECO:0007669"/>
    <property type="project" value="UniProtKB-UniRule"/>
</dbReference>
<dbReference type="CDD" id="cd04724">
    <property type="entry name" value="Tryptophan_synthase_alpha"/>
    <property type="match status" value="1"/>
</dbReference>
<dbReference type="FunFam" id="3.20.20.70:FF:000037">
    <property type="entry name" value="Tryptophan synthase alpha chain"/>
    <property type="match status" value="1"/>
</dbReference>
<dbReference type="Gene3D" id="3.20.20.70">
    <property type="entry name" value="Aldolase class I"/>
    <property type="match status" value="1"/>
</dbReference>
<dbReference type="HAMAP" id="MF_00131">
    <property type="entry name" value="Trp_synth_alpha"/>
    <property type="match status" value="1"/>
</dbReference>
<dbReference type="InterPro" id="IPR013785">
    <property type="entry name" value="Aldolase_TIM"/>
</dbReference>
<dbReference type="InterPro" id="IPR011060">
    <property type="entry name" value="RibuloseP-bd_barrel"/>
</dbReference>
<dbReference type="InterPro" id="IPR018204">
    <property type="entry name" value="Trp_synthase_alpha_AS"/>
</dbReference>
<dbReference type="InterPro" id="IPR002028">
    <property type="entry name" value="Trp_synthase_suA"/>
</dbReference>
<dbReference type="NCBIfam" id="TIGR00262">
    <property type="entry name" value="trpA"/>
    <property type="match status" value="1"/>
</dbReference>
<dbReference type="PANTHER" id="PTHR43406:SF1">
    <property type="entry name" value="TRYPTOPHAN SYNTHASE ALPHA CHAIN, CHLOROPLASTIC"/>
    <property type="match status" value="1"/>
</dbReference>
<dbReference type="PANTHER" id="PTHR43406">
    <property type="entry name" value="TRYPTOPHAN SYNTHASE, ALPHA CHAIN"/>
    <property type="match status" value="1"/>
</dbReference>
<dbReference type="Pfam" id="PF00290">
    <property type="entry name" value="Trp_syntA"/>
    <property type="match status" value="1"/>
</dbReference>
<dbReference type="SUPFAM" id="SSF51366">
    <property type="entry name" value="Ribulose-phoshate binding barrel"/>
    <property type="match status" value="1"/>
</dbReference>
<dbReference type="PROSITE" id="PS00167">
    <property type="entry name" value="TRP_SYNTHASE_ALPHA"/>
    <property type="match status" value="1"/>
</dbReference>
<evidence type="ECO:0000255" key="1">
    <source>
        <dbReference type="HAMAP-Rule" id="MF_00131"/>
    </source>
</evidence>
<reference key="1">
    <citation type="journal article" date="2013" name="Proc. Natl. Acad. Sci. U.S.A.">
        <title>Polynucleobacter necessarius, a model for genome reduction in both free-living and symbiotic bacteria.</title>
        <authorList>
            <person name="Boscaro V."/>
            <person name="Felletti M."/>
            <person name="Vannini C."/>
            <person name="Ackerman M.S."/>
            <person name="Chain P.S."/>
            <person name="Malfatti S."/>
            <person name="Vergez L.M."/>
            <person name="Shin M."/>
            <person name="Doak T.G."/>
            <person name="Lynch M."/>
            <person name="Petroni G."/>
        </authorList>
    </citation>
    <scope>NUCLEOTIDE SEQUENCE [LARGE SCALE GENOMIC DNA]</scope>
    <source>
        <strain>STIR1</strain>
    </source>
</reference>
<comment type="function">
    <text evidence="1">The alpha subunit is responsible for the aldol cleavage of indoleglycerol phosphate to indole and glyceraldehyde 3-phosphate.</text>
</comment>
<comment type="catalytic activity">
    <reaction evidence="1">
        <text>(1S,2R)-1-C-(indol-3-yl)glycerol 3-phosphate + L-serine = D-glyceraldehyde 3-phosphate + L-tryptophan + H2O</text>
        <dbReference type="Rhea" id="RHEA:10532"/>
        <dbReference type="ChEBI" id="CHEBI:15377"/>
        <dbReference type="ChEBI" id="CHEBI:33384"/>
        <dbReference type="ChEBI" id="CHEBI:57912"/>
        <dbReference type="ChEBI" id="CHEBI:58866"/>
        <dbReference type="ChEBI" id="CHEBI:59776"/>
        <dbReference type="EC" id="4.2.1.20"/>
    </reaction>
</comment>
<comment type="pathway">
    <text evidence="1">Amino-acid biosynthesis; L-tryptophan biosynthesis; L-tryptophan from chorismate: step 5/5.</text>
</comment>
<comment type="subunit">
    <text evidence="1">Tetramer of two alpha and two beta chains.</text>
</comment>
<comment type="similarity">
    <text evidence="1">Belongs to the TrpA family.</text>
</comment>
<feature type="chain" id="PRO_1000095738" description="Tryptophan synthase alpha chain">
    <location>
        <begin position="1"/>
        <end position="265"/>
    </location>
</feature>
<feature type="active site" description="Proton acceptor" evidence="1">
    <location>
        <position position="49"/>
    </location>
</feature>
<feature type="active site" description="Proton acceptor" evidence="1">
    <location>
        <position position="60"/>
    </location>
</feature>
<accession>B1XV46</accession>
<proteinExistence type="inferred from homology"/>
<keyword id="KW-0028">Amino-acid biosynthesis</keyword>
<keyword id="KW-0057">Aromatic amino acid biosynthesis</keyword>
<keyword id="KW-0456">Lyase</keyword>
<keyword id="KW-0822">Tryptophan biosynthesis</keyword>
<protein>
    <recommendedName>
        <fullName evidence="1">Tryptophan synthase alpha chain</fullName>
        <ecNumber evidence="1">4.2.1.20</ecNumber>
    </recommendedName>
</protein>
<organism>
    <name type="scientific">Polynucleobacter necessarius subsp. necessarius (strain STIR1)</name>
    <dbReference type="NCBI Taxonomy" id="452638"/>
    <lineage>
        <taxon>Bacteria</taxon>
        <taxon>Pseudomonadati</taxon>
        <taxon>Pseudomonadota</taxon>
        <taxon>Betaproteobacteria</taxon>
        <taxon>Burkholderiales</taxon>
        <taxon>Burkholderiaceae</taxon>
        <taxon>Polynucleobacter</taxon>
    </lineage>
</organism>
<gene>
    <name evidence="1" type="primary">trpA</name>
    <name type="ordered locus">Pnec_1048</name>
</gene>